<name>MURB_SYNJA</name>
<reference key="1">
    <citation type="journal article" date="2007" name="ISME J.">
        <title>Population level functional diversity in a microbial community revealed by comparative genomic and metagenomic analyses.</title>
        <authorList>
            <person name="Bhaya D."/>
            <person name="Grossman A.R."/>
            <person name="Steunou A.-S."/>
            <person name="Khuri N."/>
            <person name="Cohan F.M."/>
            <person name="Hamamura N."/>
            <person name="Melendrez M.C."/>
            <person name="Bateson M.M."/>
            <person name="Ward D.M."/>
            <person name="Heidelberg J.F."/>
        </authorList>
    </citation>
    <scope>NUCLEOTIDE SEQUENCE [LARGE SCALE GENOMIC DNA]</scope>
    <source>
        <strain>JA-3-3Ab</strain>
    </source>
</reference>
<gene>
    <name evidence="1" type="primary">murB</name>
    <name type="ordered locus">CYA_1875</name>
</gene>
<sequence length="312" mass="34044">MTTAPCVPNASSVARLSGRIQAGIPLAPLTTFRVGGKAEWYCEPHNNLELQQCLAWARAQGIPVTLLGAGSNLLISDAGLPGLVIHTRRLRGMQLLEGGRIWAAAGEPLVNLARAAAKRGWSGLEWAIGIPGTLGGAVVMNAGAHGRAMSDVLVEVQILDEEQEPCRLEPVDLQFGYRRSRLQDSPWTVTGATLQLLPGRDPAQVQRQTQRHLNQRLSSQPYHLPSCGSVFRNPETHPAGWLIEQVGLKGYRIGGAQISERHANFILNCGQASANDIYRLICLAQEKVYQRWSIFLEPEVRILGSFDDPLIS</sequence>
<accession>Q2JTH4</accession>
<feature type="chain" id="PRO_0000332512" description="UDP-N-acetylenolpyruvoylglucosamine reductase">
    <location>
        <begin position="1"/>
        <end position="312"/>
    </location>
</feature>
<feature type="domain" description="FAD-binding PCMH-type" evidence="1">
    <location>
        <begin position="33"/>
        <end position="199"/>
    </location>
</feature>
<feature type="active site" evidence="1">
    <location>
        <position position="178"/>
    </location>
</feature>
<feature type="active site" description="Proton donor" evidence="1">
    <location>
        <position position="229"/>
    </location>
</feature>
<feature type="active site" evidence="1">
    <location>
        <position position="299"/>
    </location>
</feature>
<dbReference type="EC" id="1.3.1.98" evidence="1"/>
<dbReference type="EMBL" id="CP000239">
    <property type="protein sequence ID" value="ABD00023.1"/>
    <property type="molecule type" value="Genomic_DNA"/>
</dbReference>
<dbReference type="RefSeq" id="WP_011430698.1">
    <property type="nucleotide sequence ID" value="NC_007775.1"/>
</dbReference>
<dbReference type="SMR" id="Q2JTH4"/>
<dbReference type="STRING" id="321327.CYA_1875"/>
<dbReference type="KEGG" id="cya:CYA_1875"/>
<dbReference type="eggNOG" id="COG0812">
    <property type="taxonomic scope" value="Bacteria"/>
</dbReference>
<dbReference type="HOGENOM" id="CLU_035304_1_1_3"/>
<dbReference type="OrthoDB" id="9804753at2"/>
<dbReference type="UniPathway" id="UPA00219"/>
<dbReference type="Proteomes" id="UP000008818">
    <property type="component" value="Chromosome"/>
</dbReference>
<dbReference type="GO" id="GO:0005829">
    <property type="term" value="C:cytosol"/>
    <property type="evidence" value="ECO:0007669"/>
    <property type="project" value="TreeGrafter"/>
</dbReference>
<dbReference type="GO" id="GO:0071949">
    <property type="term" value="F:FAD binding"/>
    <property type="evidence" value="ECO:0007669"/>
    <property type="project" value="InterPro"/>
</dbReference>
<dbReference type="GO" id="GO:0008762">
    <property type="term" value="F:UDP-N-acetylmuramate dehydrogenase activity"/>
    <property type="evidence" value="ECO:0007669"/>
    <property type="project" value="UniProtKB-UniRule"/>
</dbReference>
<dbReference type="GO" id="GO:0051301">
    <property type="term" value="P:cell division"/>
    <property type="evidence" value="ECO:0007669"/>
    <property type="project" value="UniProtKB-KW"/>
</dbReference>
<dbReference type="GO" id="GO:0071555">
    <property type="term" value="P:cell wall organization"/>
    <property type="evidence" value="ECO:0007669"/>
    <property type="project" value="UniProtKB-KW"/>
</dbReference>
<dbReference type="GO" id="GO:0009252">
    <property type="term" value="P:peptidoglycan biosynthetic process"/>
    <property type="evidence" value="ECO:0007669"/>
    <property type="project" value="UniProtKB-UniRule"/>
</dbReference>
<dbReference type="GO" id="GO:0008360">
    <property type="term" value="P:regulation of cell shape"/>
    <property type="evidence" value="ECO:0007669"/>
    <property type="project" value="UniProtKB-KW"/>
</dbReference>
<dbReference type="Gene3D" id="3.30.465.10">
    <property type="match status" value="1"/>
</dbReference>
<dbReference type="Gene3D" id="3.90.78.10">
    <property type="entry name" value="UDP-N-acetylenolpyruvoylglucosamine reductase, C-terminal domain"/>
    <property type="match status" value="1"/>
</dbReference>
<dbReference type="Gene3D" id="3.30.43.10">
    <property type="entry name" value="Uridine Diphospho-n-acetylenolpyruvylglucosamine Reductase, domain 2"/>
    <property type="match status" value="1"/>
</dbReference>
<dbReference type="HAMAP" id="MF_00037">
    <property type="entry name" value="MurB"/>
    <property type="match status" value="1"/>
</dbReference>
<dbReference type="InterPro" id="IPR016166">
    <property type="entry name" value="FAD-bd_PCMH"/>
</dbReference>
<dbReference type="InterPro" id="IPR036318">
    <property type="entry name" value="FAD-bd_PCMH-like_sf"/>
</dbReference>
<dbReference type="InterPro" id="IPR016167">
    <property type="entry name" value="FAD-bd_PCMH_sub1"/>
</dbReference>
<dbReference type="InterPro" id="IPR016169">
    <property type="entry name" value="FAD-bd_PCMH_sub2"/>
</dbReference>
<dbReference type="InterPro" id="IPR003170">
    <property type="entry name" value="MurB"/>
</dbReference>
<dbReference type="InterPro" id="IPR011601">
    <property type="entry name" value="MurB_C"/>
</dbReference>
<dbReference type="InterPro" id="IPR036635">
    <property type="entry name" value="MurB_C_sf"/>
</dbReference>
<dbReference type="InterPro" id="IPR006094">
    <property type="entry name" value="Oxid_FAD_bind_N"/>
</dbReference>
<dbReference type="NCBIfam" id="TIGR00179">
    <property type="entry name" value="murB"/>
    <property type="match status" value="1"/>
</dbReference>
<dbReference type="NCBIfam" id="NF010480">
    <property type="entry name" value="PRK13905.1"/>
    <property type="match status" value="1"/>
</dbReference>
<dbReference type="PANTHER" id="PTHR21071">
    <property type="entry name" value="UDP-N-ACETYLENOLPYRUVOYLGLUCOSAMINE REDUCTASE"/>
    <property type="match status" value="1"/>
</dbReference>
<dbReference type="PANTHER" id="PTHR21071:SF4">
    <property type="entry name" value="UDP-N-ACETYLENOLPYRUVOYLGLUCOSAMINE REDUCTASE"/>
    <property type="match status" value="1"/>
</dbReference>
<dbReference type="Pfam" id="PF01565">
    <property type="entry name" value="FAD_binding_4"/>
    <property type="match status" value="1"/>
</dbReference>
<dbReference type="Pfam" id="PF02873">
    <property type="entry name" value="MurB_C"/>
    <property type="match status" value="1"/>
</dbReference>
<dbReference type="SUPFAM" id="SSF56176">
    <property type="entry name" value="FAD-binding/transporter-associated domain-like"/>
    <property type="match status" value="1"/>
</dbReference>
<dbReference type="SUPFAM" id="SSF56194">
    <property type="entry name" value="Uridine diphospho-N-Acetylenolpyruvylglucosamine reductase, MurB, C-terminal domain"/>
    <property type="match status" value="1"/>
</dbReference>
<dbReference type="PROSITE" id="PS51387">
    <property type="entry name" value="FAD_PCMH"/>
    <property type="match status" value="1"/>
</dbReference>
<protein>
    <recommendedName>
        <fullName evidence="1">UDP-N-acetylenolpyruvoylglucosamine reductase</fullName>
        <ecNumber evidence="1">1.3.1.98</ecNumber>
    </recommendedName>
    <alternativeName>
        <fullName evidence="1">UDP-N-acetylmuramate dehydrogenase</fullName>
    </alternativeName>
</protein>
<organism>
    <name type="scientific">Synechococcus sp. (strain JA-3-3Ab)</name>
    <name type="common">Cyanobacteria bacterium Yellowstone A-Prime</name>
    <dbReference type="NCBI Taxonomy" id="321327"/>
    <lineage>
        <taxon>Bacteria</taxon>
        <taxon>Bacillati</taxon>
        <taxon>Cyanobacteriota</taxon>
        <taxon>Cyanophyceae</taxon>
        <taxon>Synechococcales</taxon>
        <taxon>Synechococcaceae</taxon>
        <taxon>Synechococcus</taxon>
    </lineage>
</organism>
<keyword id="KW-0131">Cell cycle</keyword>
<keyword id="KW-0132">Cell division</keyword>
<keyword id="KW-0133">Cell shape</keyword>
<keyword id="KW-0961">Cell wall biogenesis/degradation</keyword>
<keyword id="KW-0963">Cytoplasm</keyword>
<keyword id="KW-0274">FAD</keyword>
<keyword id="KW-0285">Flavoprotein</keyword>
<keyword id="KW-0521">NADP</keyword>
<keyword id="KW-0560">Oxidoreductase</keyword>
<keyword id="KW-0573">Peptidoglycan synthesis</keyword>
<proteinExistence type="inferred from homology"/>
<comment type="function">
    <text evidence="1">Cell wall formation.</text>
</comment>
<comment type="catalytic activity">
    <reaction evidence="1">
        <text>UDP-N-acetyl-alpha-D-muramate + NADP(+) = UDP-N-acetyl-3-O-(1-carboxyvinyl)-alpha-D-glucosamine + NADPH + H(+)</text>
        <dbReference type="Rhea" id="RHEA:12248"/>
        <dbReference type="ChEBI" id="CHEBI:15378"/>
        <dbReference type="ChEBI" id="CHEBI:57783"/>
        <dbReference type="ChEBI" id="CHEBI:58349"/>
        <dbReference type="ChEBI" id="CHEBI:68483"/>
        <dbReference type="ChEBI" id="CHEBI:70757"/>
        <dbReference type="EC" id="1.3.1.98"/>
    </reaction>
</comment>
<comment type="cofactor">
    <cofactor evidence="1">
        <name>FAD</name>
        <dbReference type="ChEBI" id="CHEBI:57692"/>
    </cofactor>
</comment>
<comment type="pathway">
    <text evidence="1">Cell wall biogenesis; peptidoglycan biosynthesis.</text>
</comment>
<comment type="subcellular location">
    <subcellularLocation>
        <location evidence="1">Cytoplasm</location>
    </subcellularLocation>
</comment>
<comment type="similarity">
    <text evidence="1">Belongs to the MurB family.</text>
</comment>
<evidence type="ECO:0000255" key="1">
    <source>
        <dbReference type="HAMAP-Rule" id="MF_00037"/>
    </source>
</evidence>